<dbReference type="EC" id="5.6.1.7" evidence="1"/>
<dbReference type="EMBL" id="CP000248">
    <property type="protein sequence ID" value="ABD24484.1"/>
    <property type="molecule type" value="Genomic_DNA"/>
</dbReference>
<dbReference type="RefSeq" id="WP_011443698.1">
    <property type="nucleotide sequence ID" value="NC_007794.1"/>
</dbReference>
<dbReference type="SMR" id="Q2G2Z4"/>
<dbReference type="STRING" id="279238.Saro_0035"/>
<dbReference type="KEGG" id="nar:Saro_0035"/>
<dbReference type="eggNOG" id="COG0459">
    <property type="taxonomic scope" value="Bacteria"/>
</dbReference>
<dbReference type="HOGENOM" id="CLU_016503_3_0_5"/>
<dbReference type="Proteomes" id="UP000009134">
    <property type="component" value="Chromosome"/>
</dbReference>
<dbReference type="GO" id="GO:0005737">
    <property type="term" value="C:cytoplasm"/>
    <property type="evidence" value="ECO:0007669"/>
    <property type="project" value="UniProtKB-SubCell"/>
</dbReference>
<dbReference type="GO" id="GO:0005524">
    <property type="term" value="F:ATP binding"/>
    <property type="evidence" value="ECO:0007669"/>
    <property type="project" value="UniProtKB-UniRule"/>
</dbReference>
<dbReference type="GO" id="GO:0140662">
    <property type="term" value="F:ATP-dependent protein folding chaperone"/>
    <property type="evidence" value="ECO:0007669"/>
    <property type="project" value="InterPro"/>
</dbReference>
<dbReference type="GO" id="GO:0016853">
    <property type="term" value="F:isomerase activity"/>
    <property type="evidence" value="ECO:0007669"/>
    <property type="project" value="UniProtKB-KW"/>
</dbReference>
<dbReference type="GO" id="GO:0051082">
    <property type="term" value="F:unfolded protein binding"/>
    <property type="evidence" value="ECO:0007669"/>
    <property type="project" value="UniProtKB-UniRule"/>
</dbReference>
<dbReference type="GO" id="GO:0042026">
    <property type="term" value="P:protein refolding"/>
    <property type="evidence" value="ECO:0007669"/>
    <property type="project" value="UniProtKB-UniRule"/>
</dbReference>
<dbReference type="CDD" id="cd03344">
    <property type="entry name" value="GroEL"/>
    <property type="match status" value="1"/>
</dbReference>
<dbReference type="FunFam" id="1.10.560.10:FF:000001">
    <property type="entry name" value="60 kDa chaperonin"/>
    <property type="match status" value="1"/>
</dbReference>
<dbReference type="FunFam" id="3.50.7.10:FF:000001">
    <property type="entry name" value="60 kDa chaperonin"/>
    <property type="match status" value="1"/>
</dbReference>
<dbReference type="Gene3D" id="3.50.7.10">
    <property type="entry name" value="GroEL"/>
    <property type="match status" value="1"/>
</dbReference>
<dbReference type="Gene3D" id="1.10.560.10">
    <property type="entry name" value="GroEL-like equatorial domain"/>
    <property type="match status" value="1"/>
</dbReference>
<dbReference type="Gene3D" id="3.30.260.10">
    <property type="entry name" value="TCP-1-like chaperonin intermediate domain"/>
    <property type="match status" value="1"/>
</dbReference>
<dbReference type="HAMAP" id="MF_00600">
    <property type="entry name" value="CH60"/>
    <property type="match status" value="1"/>
</dbReference>
<dbReference type="InterPro" id="IPR018370">
    <property type="entry name" value="Chaperonin_Cpn60_CS"/>
</dbReference>
<dbReference type="InterPro" id="IPR001844">
    <property type="entry name" value="Cpn60/GroEL"/>
</dbReference>
<dbReference type="InterPro" id="IPR002423">
    <property type="entry name" value="Cpn60/GroEL/TCP-1"/>
</dbReference>
<dbReference type="InterPro" id="IPR027409">
    <property type="entry name" value="GroEL-like_apical_dom_sf"/>
</dbReference>
<dbReference type="InterPro" id="IPR027413">
    <property type="entry name" value="GROEL-like_equatorial_sf"/>
</dbReference>
<dbReference type="InterPro" id="IPR027410">
    <property type="entry name" value="TCP-1-like_intermed_sf"/>
</dbReference>
<dbReference type="NCBIfam" id="TIGR02348">
    <property type="entry name" value="GroEL"/>
    <property type="match status" value="1"/>
</dbReference>
<dbReference type="NCBIfam" id="NF000592">
    <property type="entry name" value="PRK00013.1"/>
    <property type="match status" value="1"/>
</dbReference>
<dbReference type="NCBIfam" id="NF009487">
    <property type="entry name" value="PRK12849.1"/>
    <property type="match status" value="1"/>
</dbReference>
<dbReference type="NCBIfam" id="NF009488">
    <property type="entry name" value="PRK12850.1"/>
    <property type="match status" value="1"/>
</dbReference>
<dbReference type="NCBIfam" id="NF009489">
    <property type="entry name" value="PRK12851.1"/>
    <property type="match status" value="1"/>
</dbReference>
<dbReference type="PANTHER" id="PTHR45633">
    <property type="entry name" value="60 KDA HEAT SHOCK PROTEIN, MITOCHONDRIAL"/>
    <property type="match status" value="1"/>
</dbReference>
<dbReference type="Pfam" id="PF00118">
    <property type="entry name" value="Cpn60_TCP1"/>
    <property type="match status" value="1"/>
</dbReference>
<dbReference type="PRINTS" id="PR00298">
    <property type="entry name" value="CHAPERONIN60"/>
</dbReference>
<dbReference type="SUPFAM" id="SSF52029">
    <property type="entry name" value="GroEL apical domain-like"/>
    <property type="match status" value="1"/>
</dbReference>
<dbReference type="SUPFAM" id="SSF48592">
    <property type="entry name" value="GroEL equatorial domain-like"/>
    <property type="match status" value="1"/>
</dbReference>
<dbReference type="SUPFAM" id="SSF54849">
    <property type="entry name" value="GroEL-intermediate domain like"/>
    <property type="match status" value="1"/>
</dbReference>
<dbReference type="PROSITE" id="PS00296">
    <property type="entry name" value="CHAPERONINS_CPN60"/>
    <property type="match status" value="1"/>
</dbReference>
<evidence type="ECO:0000255" key="1">
    <source>
        <dbReference type="HAMAP-Rule" id="MF_00600"/>
    </source>
</evidence>
<evidence type="ECO:0000256" key="2">
    <source>
        <dbReference type="SAM" id="MobiDB-lite"/>
    </source>
</evidence>
<gene>
    <name evidence="1" type="primary">groEL</name>
    <name evidence="1" type="synonym">groL</name>
    <name type="ordered locus">Saro_0035</name>
</gene>
<name>CH60_NOVAD</name>
<organism>
    <name type="scientific">Novosphingobium aromaticivorans (strain ATCC 700278 / DSM 12444 / CCUG 56034 / CIP 105152 / NBRC 16084 / F199)</name>
    <dbReference type="NCBI Taxonomy" id="279238"/>
    <lineage>
        <taxon>Bacteria</taxon>
        <taxon>Pseudomonadati</taxon>
        <taxon>Pseudomonadota</taxon>
        <taxon>Alphaproteobacteria</taxon>
        <taxon>Sphingomonadales</taxon>
        <taxon>Sphingomonadaceae</taxon>
        <taxon>Novosphingobium</taxon>
    </lineage>
</organism>
<comment type="function">
    <text evidence="1">Together with its co-chaperonin GroES, plays an essential role in assisting protein folding. The GroEL-GroES system forms a nano-cage that allows encapsulation of the non-native substrate proteins and provides a physical environment optimized to promote and accelerate protein folding.</text>
</comment>
<comment type="catalytic activity">
    <reaction evidence="1">
        <text>ATP + H2O + a folded polypeptide = ADP + phosphate + an unfolded polypeptide.</text>
        <dbReference type="EC" id="5.6.1.7"/>
    </reaction>
</comment>
<comment type="subunit">
    <text evidence="1">Forms a cylinder of 14 subunits composed of two heptameric rings stacked back-to-back. Interacts with the co-chaperonin GroES.</text>
</comment>
<comment type="subcellular location">
    <subcellularLocation>
        <location evidence="1">Cytoplasm</location>
    </subcellularLocation>
</comment>
<comment type="similarity">
    <text evidence="1">Belongs to the chaperonin (HSP60) family.</text>
</comment>
<sequence>MAAKDVKFGRDARERILRGVDILADAVKVTLGPKGRNVVIDKSFGAPRITKDGVSVAKEIELKDKFENMGAQMLREVASKANDAAGDGTTTATVLAQAIVREGMTAVAAGMNPMDLKRGIDIAVGKVVENLKARSTPVAGSSEIAQVGIISANGDTEVGQKIAEAMEKVGKEGVITVEEAKGLEFELDVVEGMQFDRGYLSPYFITNPEKMTVELENPYILIHEKKLSSLQAMLPILEAVVQSGRPLLIIAEDIEGEALATLVVNKLRGGLKIAAVKAPGFGDRRKAMLGDIATLTAGEMISEDLGIKLESVTLAMLGQAKKVTIDKDNTTIVDGAGSAEEIKARVEQIRAQIEVTTSDYDREKLQERLAKLAGGVAVIKVGGATEVEVKERKDRVDDALHATRAAVEEGIVPGGGTALLYATKALEGLKGANDDQTKGIDIVRRAIQAPIRQIAANAGHDGAVVSGNLLRENDENQGFNAATDTYENLKAAGVIDPTKVVRTALQDAASVSGLLITTEAAISEKPDDKPAMPPMGGGMGGMGGMDF</sequence>
<reference key="1">
    <citation type="submission" date="2006-01" db="EMBL/GenBank/DDBJ databases">
        <title>Complete sequence of Novosphingobium aromaticivorans DSM 12444.</title>
        <authorList>
            <consortium name="US DOE Joint Genome Institute"/>
            <person name="Copeland A."/>
            <person name="Lucas S."/>
            <person name="Lapidus A."/>
            <person name="Barry K."/>
            <person name="Detter J.C."/>
            <person name="Glavina T."/>
            <person name="Hammon N."/>
            <person name="Israni S."/>
            <person name="Pitluck S."/>
            <person name="Chain P."/>
            <person name="Malfatti S."/>
            <person name="Shin M."/>
            <person name="Vergez L."/>
            <person name="Schmutz J."/>
            <person name="Larimer F."/>
            <person name="Land M."/>
            <person name="Kyrpides N."/>
            <person name="Ivanova N."/>
            <person name="Fredrickson J."/>
            <person name="Balkwill D."/>
            <person name="Romine M.F."/>
            <person name="Richardson P."/>
        </authorList>
    </citation>
    <scope>NUCLEOTIDE SEQUENCE [LARGE SCALE GENOMIC DNA]</scope>
    <source>
        <strain>ATCC 700278 / DSM 12444 / CCUG 56034 / CIP 105152 / NBRC 16084 / F199</strain>
    </source>
</reference>
<accession>Q2G2Z4</accession>
<keyword id="KW-0067">ATP-binding</keyword>
<keyword id="KW-0143">Chaperone</keyword>
<keyword id="KW-0963">Cytoplasm</keyword>
<keyword id="KW-0413">Isomerase</keyword>
<keyword id="KW-0547">Nucleotide-binding</keyword>
<keyword id="KW-1185">Reference proteome</keyword>
<protein>
    <recommendedName>
        <fullName evidence="1">Chaperonin GroEL</fullName>
        <ecNumber evidence="1">5.6.1.7</ecNumber>
    </recommendedName>
    <alternativeName>
        <fullName evidence="1">60 kDa chaperonin</fullName>
    </alternativeName>
    <alternativeName>
        <fullName evidence="1">Chaperonin-60</fullName>
        <shortName evidence="1">Cpn60</shortName>
    </alternativeName>
</protein>
<feature type="chain" id="PRO_0000256941" description="Chaperonin GroEL">
    <location>
        <begin position="1"/>
        <end position="547"/>
    </location>
</feature>
<feature type="region of interest" description="Disordered" evidence="2">
    <location>
        <begin position="525"/>
        <end position="547"/>
    </location>
</feature>
<feature type="compositionally biased region" description="Gly residues" evidence="2">
    <location>
        <begin position="535"/>
        <end position="547"/>
    </location>
</feature>
<feature type="binding site" evidence="1">
    <location>
        <begin position="30"/>
        <end position="33"/>
    </location>
    <ligand>
        <name>ATP</name>
        <dbReference type="ChEBI" id="CHEBI:30616"/>
    </ligand>
</feature>
<feature type="binding site" evidence="1">
    <location>
        <position position="51"/>
    </location>
    <ligand>
        <name>ATP</name>
        <dbReference type="ChEBI" id="CHEBI:30616"/>
    </ligand>
</feature>
<feature type="binding site" evidence="1">
    <location>
        <begin position="87"/>
        <end position="91"/>
    </location>
    <ligand>
        <name>ATP</name>
        <dbReference type="ChEBI" id="CHEBI:30616"/>
    </ligand>
</feature>
<feature type="binding site" evidence="1">
    <location>
        <position position="415"/>
    </location>
    <ligand>
        <name>ATP</name>
        <dbReference type="ChEBI" id="CHEBI:30616"/>
    </ligand>
</feature>
<feature type="binding site" evidence="1">
    <location>
        <begin position="480"/>
        <end position="482"/>
    </location>
    <ligand>
        <name>ATP</name>
        <dbReference type="ChEBI" id="CHEBI:30616"/>
    </ligand>
</feature>
<feature type="binding site" evidence="1">
    <location>
        <position position="496"/>
    </location>
    <ligand>
        <name>ATP</name>
        <dbReference type="ChEBI" id="CHEBI:30616"/>
    </ligand>
</feature>
<proteinExistence type="inferred from homology"/>